<sequence>MDSAITLWQFLLQLLQKPQNKHMICWTSNDGQFKLLQAEEVARLWGIRKNKPNMNYDKLSRALRYYYVKNIIKKVNGQKFVYKFVSYPEILNMDPMTVGRIEGDCESLNFSEVSSSSKDVENGGKDKPPQPGAKTSSRNDYIHSGLYSSFTLNSLNSSNVKLFKLIKTENPAEKLAEKKSPQEPTPSVIKFVTTPSKKPPVEPVAATISIGPSISPSSEETIQALETLVSPKLPSLEAPTSASNVMTAFATTPPISSIPPLQEPPRTPSPPLSSHPDIDTDIDSVASQPMELPENLSLEPKDQDSVLLEKDKVNNSSRSKKPKGLELAPTLVITSSDPSPLGILSPSLPTASLTPAFFSQTPIILTPSPLLSSIHFWSTLSPVAPLSPARLQGANTLFQFPSVLNSHGPFTLSGLDGPSTPGPFSPDLQKT</sequence>
<feature type="chain" id="PRO_0000204099" description="ETS domain-containing protein Elk-4">
    <location>
        <begin position="1"/>
        <end position="431"/>
    </location>
</feature>
<feature type="DNA-binding region" description="ETS" evidence="1">
    <location>
        <begin position="5"/>
        <end position="85"/>
    </location>
</feature>
<feature type="region of interest" description="Disordered" evidence="2">
    <location>
        <begin position="114"/>
        <end position="139"/>
    </location>
</feature>
<feature type="region of interest" description="Disordered" evidence="2">
    <location>
        <begin position="251"/>
        <end position="282"/>
    </location>
</feature>
<feature type="region of interest" description="Disordered" evidence="2">
    <location>
        <begin position="294"/>
        <end position="323"/>
    </location>
</feature>
<feature type="region of interest" description="Disordered" evidence="2">
    <location>
        <begin position="411"/>
        <end position="431"/>
    </location>
</feature>
<feature type="compositionally biased region" description="Basic and acidic residues" evidence="2">
    <location>
        <begin position="118"/>
        <end position="128"/>
    </location>
</feature>
<feature type="compositionally biased region" description="Pro residues" evidence="2">
    <location>
        <begin position="261"/>
        <end position="273"/>
    </location>
</feature>
<feature type="compositionally biased region" description="Basic and acidic residues" evidence="2">
    <location>
        <begin position="299"/>
        <end position="313"/>
    </location>
</feature>
<feature type="modified residue" description="Phosphoserine" evidence="6">
    <location>
        <position position="180"/>
    </location>
</feature>
<feature type="cross-link" description="Glycyl lysine isopeptide (Lys-Gly) (interchain with G-Cter in SUMO2)" evidence="7">
    <location>
        <position position="167"/>
    </location>
</feature>
<feature type="splice variant" id="VSP_001468" description="In isoform 2." evidence="4">
    <original>TPIILTPSPLLSSIHFWSTLSPVAPLSPARLQGANTLFQFPSVLNSHGPFTLSGLDGPSTPGPFSPDLQKT</original>
    <variation>VACSLFMVSPLLSFICPFKQIQNLYTQVCFLLLRFVLERLCVTVM</variation>
    <location>
        <begin position="361"/>
        <end position="431"/>
    </location>
</feature>
<feature type="sequence conflict" description="In Ref. 1; AAA03631." evidence="5" ref="1">
    <original>E</original>
    <variation>G</variation>
    <location>
        <position position="326"/>
    </location>
</feature>
<feature type="helix" evidence="8">
    <location>
        <begin position="7"/>
        <end position="14"/>
    </location>
</feature>
<feature type="helix" evidence="8">
    <location>
        <begin position="18"/>
        <end position="20"/>
    </location>
</feature>
<feature type="turn" evidence="8">
    <location>
        <begin position="21"/>
        <end position="23"/>
    </location>
</feature>
<feature type="strand" evidence="8">
    <location>
        <begin position="24"/>
        <end position="26"/>
    </location>
</feature>
<feature type="strand" evidence="8">
    <location>
        <begin position="28"/>
        <end position="34"/>
    </location>
</feature>
<feature type="helix" evidence="8">
    <location>
        <begin position="38"/>
        <end position="49"/>
    </location>
</feature>
<feature type="helix" evidence="8">
    <location>
        <begin position="56"/>
        <end position="69"/>
    </location>
</feature>
<feature type="strand" evidence="8">
    <location>
        <begin position="71"/>
        <end position="74"/>
    </location>
</feature>
<feature type="strand" evidence="10">
    <location>
        <begin position="76"/>
        <end position="78"/>
    </location>
</feature>
<feature type="strand" evidence="8">
    <location>
        <begin position="81"/>
        <end position="84"/>
    </location>
</feature>
<feature type="turn" evidence="8">
    <location>
        <begin position="85"/>
        <end position="88"/>
    </location>
</feature>
<feature type="helix" evidence="8">
    <location>
        <begin position="89"/>
        <end position="91"/>
    </location>
</feature>
<feature type="helix" evidence="9">
    <location>
        <begin position="138"/>
        <end position="143"/>
    </location>
</feature>
<feature type="strand" evidence="9">
    <location>
        <begin position="144"/>
        <end position="152"/>
    </location>
</feature>
<feature type="helix" evidence="9">
    <location>
        <begin position="153"/>
        <end position="155"/>
    </location>
</feature>
<organism>
    <name type="scientific">Homo sapiens</name>
    <name type="common">Human</name>
    <dbReference type="NCBI Taxonomy" id="9606"/>
    <lineage>
        <taxon>Eukaryota</taxon>
        <taxon>Metazoa</taxon>
        <taxon>Chordata</taxon>
        <taxon>Craniata</taxon>
        <taxon>Vertebrata</taxon>
        <taxon>Euteleostomi</taxon>
        <taxon>Mammalia</taxon>
        <taxon>Eutheria</taxon>
        <taxon>Euarchontoglires</taxon>
        <taxon>Primates</taxon>
        <taxon>Haplorrhini</taxon>
        <taxon>Catarrhini</taxon>
        <taxon>Hominidae</taxon>
        <taxon>Homo</taxon>
    </lineage>
</organism>
<reference key="1">
    <citation type="journal article" date="1992" name="Cell">
        <title>Characterization of SAP-1, a protein recruited by serum response factor to the c-fos serum response element.</title>
        <authorList>
            <person name="Dalton S."/>
            <person name="Treisman R."/>
        </authorList>
    </citation>
    <scope>NUCLEOTIDE SEQUENCE [MRNA]</scope>
    <scope>ALTERNATIVE SPLICING</scope>
</reference>
<reference key="2">
    <citation type="journal article" date="1994" name="Cell">
        <title>Characterization of SAP-1, a protein recruited by serum response factor to the c-fos serum response element.</title>
        <authorList>
            <person name="Dalton S."/>
            <person name="Treisman R."/>
        </authorList>
    </citation>
    <scope>SEQUENCE REVISION</scope>
</reference>
<reference key="3">
    <citation type="submission" date="2005-07" db="EMBL/GenBank/DDBJ databases">
        <authorList>
            <person name="Mural R.J."/>
            <person name="Istrail S."/>
            <person name="Sutton G.G."/>
            <person name="Florea L."/>
            <person name="Halpern A.L."/>
            <person name="Mobarry C.M."/>
            <person name="Lippert R."/>
            <person name="Walenz B."/>
            <person name="Shatkay H."/>
            <person name="Dew I."/>
            <person name="Miller J.R."/>
            <person name="Flanigan M.J."/>
            <person name="Edwards N.J."/>
            <person name="Bolanos R."/>
            <person name="Fasulo D."/>
            <person name="Halldorsson B.V."/>
            <person name="Hannenhalli S."/>
            <person name="Turner R."/>
            <person name="Yooseph S."/>
            <person name="Lu F."/>
            <person name="Nusskern D.R."/>
            <person name="Shue B.C."/>
            <person name="Zheng X.H."/>
            <person name="Zhong F."/>
            <person name="Delcher A.L."/>
            <person name="Huson D.H."/>
            <person name="Kravitz S.A."/>
            <person name="Mouchard L."/>
            <person name="Reinert K."/>
            <person name="Remington K.A."/>
            <person name="Clark A.G."/>
            <person name="Waterman M.S."/>
            <person name="Eichler E.E."/>
            <person name="Adams M.D."/>
            <person name="Hunkapiller M.W."/>
            <person name="Myers E.W."/>
            <person name="Venter J.C."/>
        </authorList>
    </citation>
    <scope>NUCLEOTIDE SEQUENCE [LARGE SCALE GENOMIC DNA]</scope>
</reference>
<reference key="4">
    <citation type="journal article" date="2004" name="Genome Res.">
        <title>The status, quality, and expansion of the NIH full-length cDNA project: the Mammalian Gene Collection (MGC).</title>
        <authorList>
            <consortium name="The MGC Project Team"/>
        </authorList>
    </citation>
    <scope>NUCLEOTIDE SEQUENCE [LARGE SCALE MRNA] (ISOFORM 2)</scope>
    <source>
        <tissue>Lymph</tissue>
    </source>
</reference>
<reference key="5">
    <citation type="journal article" date="2009" name="Sci. Signal.">
        <title>Quantitative phosphoproteomic analysis of T cell receptor signaling reveals system-wide modulation of protein-protein interactions.</title>
        <authorList>
            <person name="Mayya V."/>
            <person name="Lundgren D.H."/>
            <person name="Hwang S.-I."/>
            <person name="Rezaul K."/>
            <person name="Wu L."/>
            <person name="Eng J.K."/>
            <person name="Rodionov V."/>
            <person name="Han D.K."/>
        </authorList>
    </citation>
    <scope>IDENTIFICATION BY MASS SPECTROMETRY [LARGE SCALE ANALYSIS]</scope>
    <source>
        <tissue>Leukemic T-cell</tissue>
    </source>
</reference>
<reference key="6">
    <citation type="journal article" date="2013" name="J. Proteome Res.">
        <title>Toward a comprehensive characterization of a human cancer cell phosphoproteome.</title>
        <authorList>
            <person name="Zhou H."/>
            <person name="Di Palma S."/>
            <person name="Preisinger C."/>
            <person name="Peng M."/>
            <person name="Polat A.N."/>
            <person name="Heck A.J."/>
            <person name="Mohammed S."/>
        </authorList>
    </citation>
    <scope>PHOSPHORYLATION [LARGE SCALE ANALYSIS] AT SER-180</scope>
    <scope>IDENTIFICATION BY MASS SPECTROMETRY [LARGE SCALE ANALYSIS]</scope>
    <source>
        <tissue>Cervix carcinoma</tissue>
    </source>
</reference>
<reference key="7">
    <citation type="journal article" date="2017" name="Nat. Struct. Mol. Biol.">
        <title>Site-specific mapping of the human SUMO proteome reveals co-modification with phosphorylation.</title>
        <authorList>
            <person name="Hendriks I.A."/>
            <person name="Lyon D."/>
            <person name="Young C."/>
            <person name="Jensen L.J."/>
            <person name="Vertegaal A.C."/>
            <person name="Nielsen M.L."/>
        </authorList>
    </citation>
    <scope>SUMOYLATION [LARGE SCALE ANALYSIS] AT LYS-167</scope>
    <scope>IDENTIFICATION BY MASS SPECTROMETRY [LARGE SCALE ANALYSIS]</scope>
</reference>
<reference key="8">
    <citation type="journal article" date="1998" name="Mol. Cell">
        <title>Structures of SAP-1 bound to DNA targets from the E74 and c-fos promoters: insights into DNA sequence discrimination by Ets proteins.</title>
        <authorList>
            <person name="Mo Y."/>
            <person name="Vaessen B."/>
            <person name="Johnston K."/>
            <person name="Marmorstein R."/>
        </authorList>
    </citation>
    <scope>X-RAY CRYSTALLOGRAPHY (2.01 ANGSTROMS) OF 1-93</scope>
</reference>
<reference key="9">
    <citation type="journal article" date="2012" name="Nature">
        <title>SIRT7 links H3K18 deacetylation to maintenance of oncogenic transformation.</title>
        <authorList>
            <person name="Barber M.F."/>
            <person name="Michishita-Kioi E."/>
            <person name="Xi Y."/>
            <person name="Tasselli L."/>
            <person name="Kioi M."/>
            <person name="Moqtaderi Z."/>
            <person name="Tennen R.I."/>
            <person name="Paredes S."/>
            <person name="Young N.L."/>
            <person name="Chen K."/>
            <person name="Struhl K."/>
            <person name="Garcia B.A."/>
            <person name="Gozani O."/>
            <person name="Li W."/>
            <person name="Chua K.F."/>
        </authorList>
    </citation>
    <scope>FUNCTION</scope>
    <scope>INTERACTION WITH SIRT7</scope>
</reference>
<name>ELK4_HUMAN</name>
<gene>
    <name type="primary">ELK4</name>
    <name type="synonym">SAP1</name>
</gene>
<accession>P28324</accession>
<accession>P28323</accession>
<accession>Q6GSJ2</accession>
<keyword id="KW-0002">3D-structure</keyword>
<keyword id="KW-0010">Activator</keyword>
<keyword id="KW-0025">Alternative splicing</keyword>
<keyword id="KW-0238">DNA-binding</keyword>
<keyword id="KW-1017">Isopeptide bond</keyword>
<keyword id="KW-0539">Nucleus</keyword>
<keyword id="KW-0597">Phosphoprotein</keyword>
<keyword id="KW-1267">Proteomics identification</keyword>
<keyword id="KW-1185">Reference proteome</keyword>
<keyword id="KW-0678">Repressor</keyword>
<keyword id="KW-0804">Transcription</keyword>
<keyword id="KW-0805">Transcription regulation</keyword>
<keyword id="KW-0832">Ubl conjugation</keyword>
<dbReference type="EMBL" id="M85165">
    <property type="protein sequence ID" value="AAA03631.1"/>
    <property type="molecule type" value="mRNA"/>
</dbReference>
<dbReference type="EMBL" id="M85164">
    <property type="protein sequence ID" value="AAA03632.1"/>
    <property type="molecule type" value="mRNA"/>
</dbReference>
<dbReference type="EMBL" id="CH471067">
    <property type="protein sequence ID" value="EAW91570.1"/>
    <property type="molecule type" value="Genomic_DNA"/>
</dbReference>
<dbReference type="EMBL" id="BC063676">
    <property type="protein sequence ID" value="AAH63676.1"/>
    <property type="molecule type" value="mRNA"/>
</dbReference>
<dbReference type="CCDS" id="CCDS1456.1">
    <molecule id="P28324-1"/>
</dbReference>
<dbReference type="CCDS" id="CCDS1457.1">
    <molecule id="P28324-2"/>
</dbReference>
<dbReference type="PIR" id="A42093">
    <property type="entry name" value="A42093"/>
</dbReference>
<dbReference type="PIR" id="A53012">
    <property type="entry name" value="A53012"/>
</dbReference>
<dbReference type="PIR" id="B42093">
    <property type="entry name" value="B42093"/>
</dbReference>
<dbReference type="RefSeq" id="NP_001964.2">
    <molecule id="P28324-1"/>
    <property type="nucleotide sequence ID" value="NM_001973.3"/>
</dbReference>
<dbReference type="RefSeq" id="NP_068567.1">
    <molecule id="P28324-2"/>
    <property type="nucleotide sequence ID" value="NM_021795.3"/>
</dbReference>
<dbReference type="RefSeq" id="XP_005245007.1">
    <property type="nucleotide sequence ID" value="XM_005244950.4"/>
</dbReference>
<dbReference type="RefSeq" id="XP_005245008.1">
    <property type="nucleotide sequence ID" value="XM_005244951.4"/>
</dbReference>
<dbReference type="PDB" id="1BC7">
    <property type="method" value="X-ray"/>
    <property type="resolution" value="2.01 A"/>
    <property type="chains" value="C=1-93"/>
</dbReference>
<dbReference type="PDB" id="1BC8">
    <property type="method" value="X-ray"/>
    <property type="resolution" value="1.93 A"/>
    <property type="chains" value="C=1-93"/>
</dbReference>
<dbReference type="PDB" id="1HBX">
    <property type="method" value="X-ray"/>
    <property type="resolution" value="3.15 A"/>
    <property type="chains" value="G/H=2-156"/>
</dbReference>
<dbReference type="PDB" id="1K6O">
    <property type="method" value="X-ray"/>
    <property type="resolution" value="3.19 A"/>
    <property type="chains" value="A=1-93"/>
</dbReference>
<dbReference type="PDBsum" id="1BC7"/>
<dbReference type="PDBsum" id="1BC8"/>
<dbReference type="PDBsum" id="1HBX"/>
<dbReference type="PDBsum" id="1K6O"/>
<dbReference type="SMR" id="P28324"/>
<dbReference type="BioGRID" id="108320">
    <property type="interactions" value="134"/>
</dbReference>
<dbReference type="CORUM" id="P28324"/>
<dbReference type="DIP" id="DIP-59907N"/>
<dbReference type="FunCoup" id="P28324">
    <property type="interactions" value="2983"/>
</dbReference>
<dbReference type="IntAct" id="P28324">
    <property type="interactions" value="76"/>
</dbReference>
<dbReference type="STRING" id="9606.ENSP00000350681"/>
<dbReference type="GlyCosmos" id="P28324">
    <property type="glycosylation" value="1 site, 1 glycan"/>
</dbReference>
<dbReference type="GlyGen" id="P28324">
    <property type="glycosylation" value="3 sites, 2 O-linked glycans (2 sites)"/>
</dbReference>
<dbReference type="iPTMnet" id="P28324"/>
<dbReference type="PhosphoSitePlus" id="P28324"/>
<dbReference type="BioMuta" id="ELK4"/>
<dbReference type="DMDM" id="12585557"/>
<dbReference type="jPOST" id="P28324"/>
<dbReference type="MassIVE" id="P28324"/>
<dbReference type="PaxDb" id="9606-ENSP00000350681"/>
<dbReference type="PeptideAtlas" id="P28324"/>
<dbReference type="ProteomicsDB" id="54462">
    <molecule id="P28324-1"/>
</dbReference>
<dbReference type="ProteomicsDB" id="54463">
    <molecule id="P28324-2"/>
</dbReference>
<dbReference type="Antibodypedia" id="20682">
    <property type="antibodies" value="139 antibodies from 25 providers"/>
</dbReference>
<dbReference type="DNASU" id="2005"/>
<dbReference type="Ensembl" id="ENST00000289703.8">
    <molecule id="P28324-2"/>
    <property type="protein sequence ID" value="ENSP00000289703.4"/>
    <property type="gene ID" value="ENSG00000158711.14"/>
</dbReference>
<dbReference type="Ensembl" id="ENST00000357992.9">
    <molecule id="P28324-1"/>
    <property type="protein sequence ID" value="ENSP00000350681.4"/>
    <property type="gene ID" value="ENSG00000158711.14"/>
</dbReference>
<dbReference type="Ensembl" id="ENST00000616704.4">
    <molecule id="P28324-1"/>
    <property type="protein sequence ID" value="ENSP00000483628.1"/>
    <property type="gene ID" value="ENSG00000158711.14"/>
</dbReference>
<dbReference type="GeneID" id="2005"/>
<dbReference type="KEGG" id="hsa:2005"/>
<dbReference type="MANE-Select" id="ENST00000357992.9">
    <property type="protein sequence ID" value="ENSP00000350681.4"/>
    <property type="RefSeq nucleotide sequence ID" value="NM_001973.4"/>
    <property type="RefSeq protein sequence ID" value="NP_001964.2"/>
</dbReference>
<dbReference type="UCSC" id="uc001hcy.3">
    <molecule id="P28324-1"/>
    <property type="organism name" value="human"/>
</dbReference>
<dbReference type="AGR" id="HGNC:3326"/>
<dbReference type="CTD" id="2005"/>
<dbReference type="DisGeNET" id="2005"/>
<dbReference type="GeneCards" id="ELK4"/>
<dbReference type="HGNC" id="HGNC:3326">
    <property type="gene designation" value="ELK4"/>
</dbReference>
<dbReference type="HPA" id="ENSG00000158711">
    <property type="expression patterns" value="Low tissue specificity"/>
</dbReference>
<dbReference type="MIM" id="600246">
    <property type="type" value="gene"/>
</dbReference>
<dbReference type="neXtProt" id="NX_P28324"/>
<dbReference type="OpenTargets" id="ENSG00000158711"/>
<dbReference type="PharmGKB" id="PA27753"/>
<dbReference type="VEuPathDB" id="HostDB:ENSG00000158711"/>
<dbReference type="eggNOG" id="KOG3806">
    <property type="taxonomic scope" value="Eukaryota"/>
</dbReference>
<dbReference type="GeneTree" id="ENSGT00940000158900"/>
<dbReference type="HOGENOM" id="CLU_036905_1_0_1"/>
<dbReference type="InParanoid" id="P28324"/>
<dbReference type="OMA" id="KDVESCG"/>
<dbReference type="OrthoDB" id="10067219at2759"/>
<dbReference type="PAN-GO" id="P28324">
    <property type="GO annotations" value="4 GO annotations based on evolutionary models"/>
</dbReference>
<dbReference type="PhylomeDB" id="P28324"/>
<dbReference type="TreeFam" id="TF317732"/>
<dbReference type="PathwayCommons" id="P28324"/>
<dbReference type="SignaLink" id="P28324"/>
<dbReference type="SIGNOR" id="P28324"/>
<dbReference type="BioGRID-ORCS" id="2005">
    <property type="hits" value="8 hits in 1176 CRISPR screens"/>
</dbReference>
<dbReference type="ChiTaRS" id="ELK4">
    <property type="organism name" value="human"/>
</dbReference>
<dbReference type="EvolutionaryTrace" id="P28324"/>
<dbReference type="GeneWiki" id="ELK4"/>
<dbReference type="GenomeRNAi" id="2005"/>
<dbReference type="Pharos" id="P28324">
    <property type="development level" value="Tbio"/>
</dbReference>
<dbReference type="PRO" id="PR:P28324"/>
<dbReference type="Proteomes" id="UP000005640">
    <property type="component" value="Chromosome 1"/>
</dbReference>
<dbReference type="RNAct" id="P28324">
    <property type="molecule type" value="protein"/>
</dbReference>
<dbReference type="Bgee" id="ENSG00000158711">
    <property type="expression patterns" value="Expressed in tendon of biceps brachii and 192 other cell types or tissues"/>
</dbReference>
<dbReference type="ExpressionAtlas" id="P28324">
    <property type="expression patterns" value="baseline and differential"/>
</dbReference>
<dbReference type="GO" id="GO:0000785">
    <property type="term" value="C:chromatin"/>
    <property type="evidence" value="ECO:0000247"/>
    <property type="project" value="NTNU_SB"/>
</dbReference>
<dbReference type="GO" id="GO:0005829">
    <property type="term" value="C:cytosol"/>
    <property type="evidence" value="ECO:0000314"/>
    <property type="project" value="HPA"/>
</dbReference>
<dbReference type="GO" id="GO:0005654">
    <property type="term" value="C:nucleoplasm"/>
    <property type="evidence" value="ECO:0000314"/>
    <property type="project" value="HPA"/>
</dbReference>
<dbReference type="GO" id="GO:0005634">
    <property type="term" value="C:nucleus"/>
    <property type="evidence" value="ECO:0000318"/>
    <property type="project" value="GO_Central"/>
</dbReference>
<dbReference type="GO" id="GO:0003682">
    <property type="term" value="F:chromatin binding"/>
    <property type="evidence" value="ECO:0000314"/>
    <property type="project" value="UniProtKB"/>
</dbReference>
<dbReference type="GO" id="GO:0003677">
    <property type="term" value="F:DNA binding"/>
    <property type="evidence" value="ECO:0000304"/>
    <property type="project" value="ProtInc"/>
</dbReference>
<dbReference type="GO" id="GO:0001228">
    <property type="term" value="F:DNA-binding transcription activator activity, RNA polymerase II-specific"/>
    <property type="evidence" value="ECO:0000315"/>
    <property type="project" value="NTNU_SB"/>
</dbReference>
<dbReference type="GO" id="GO:0003700">
    <property type="term" value="F:DNA-binding transcription factor activity"/>
    <property type="evidence" value="ECO:0000303"/>
    <property type="project" value="ProtInc"/>
</dbReference>
<dbReference type="GO" id="GO:0000981">
    <property type="term" value="F:DNA-binding transcription factor activity, RNA polymerase II-specific"/>
    <property type="evidence" value="ECO:0000247"/>
    <property type="project" value="NTNU_SB"/>
</dbReference>
<dbReference type="GO" id="GO:0000978">
    <property type="term" value="F:RNA polymerase II cis-regulatory region sequence-specific DNA binding"/>
    <property type="evidence" value="ECO:0000314"/>
    <property type="project" value="NTNU_SB"/>
</dbReference>
<dbReference type="GO" id="GO:1990837">
    <property type="term" value="F:sequence-specific double-stranded DNA binding"/>
    <property type="evidence" value="ECO:0000314"/>
    <property type="project" value="ARUK-UCL"/>
</dbReference>
<dbReference type="GO" id="GO:0030154">
    <property type="term" value="P:cell differentiation"/>
    <property type="evidence" value="ECO:0000318"/>
    <property type="project" value="GO_Central"/>
</dbReference>
<dbReference type="GO" id="GO:0000122">
    <property type="term" value="P:negative regulation of transcription by RNA polymerase II"/>
    <property type="evidence" value="ECO:0000315"/>
    <property type="project" value="UniProtKB"/>
</dbReference>
<dbReference type="GO" id="GO:0045944">
    <property type="term" value="P:positive regulation of transcription by RNA polymerase II"/>
    <property type="evidence" value="ECO:0000315"/>
    <property type="project" value="NTNU_SB"/>
</dbReference>
<dbReference type="GO" id="GO:0006357">
    <property type="term" value="P:regulation of transcription by RNA polymerase II"/>
    <property type="evidence" value="ECO:0000318"/>
    <property type="project" value="GO_Central"/>
</dbReference>
<dbReference type="DisProt" id="DP01329"/>
<dbReference type="FunFam" id="1.10.10.10:FF:000113">
    <property type="entry name" value="ETS domain-containing protein Elk-3"/>
    <property type="match status" value="1"/>
</dbReference>
<dbReference type="Gene3D" id="1.10.10.10">
    <property type="entry name" value="Winged helix-like DNA-binding domain superfamily/Winged helix DNA-binding domain"/>
    <property type="match status" value="1"/>
</dbReference>
<dbReference type="IDEAL" id="IID00148"/>
<dbReference type="InterPro" id="IPR000418">
    <property type="entry name" value="Ets_dom"/>
</dbReference>
<dbReference type="InterPro" id="IPR046328">
    <property type="entry name" value="ETS_fam"/>
</dbReference>
<dbReference type="InterPro" id="IPR036388">
    <property type="entry name" value="WH-like_DNA-bd_sf"/>
</dbReference>
<dbReference type="InterPro" id="IPR036390">
    <property type="entry name" value="WH_DNA-bd_sf"/>
</dbReference>
<dbReference type="PANTHER" id="PTHR11849">
    <property type="entry name" value="ETS"/>
    <property type="match status" value="1"/>
</dbReference>
<dbReference type="PANTHER" id="PTHR11849:SF21">
    <property type="entry name" value="ETS DOMAIN-CONTAINING PROTEIN ELK-4"/>
    <property type="match status" value="1"/>
</dbReference>
<dbReference type="Pfam" id="PF00178">
    <property type="entry name" value="Ets"/>
    <property type="match status" value="1"/>
</dbReference>
<dbReference type="PRINTS" id="PR00454">
    <property type="entry name" value="ETSDOMAIN"/>
</dbReference>
<dbReference type="SMART" id="SM00413">
    <property type="entry name" value="ETS"/>
    <property type="match status" value="1"/>
</dbReference>
<dbReference type="SUPFAM" id="SSF46785">
    <property type="entry name" value="Winged helix' DNA-binding domain"/>
    <property type="match status" value="1"/>
</dbReference>
<dbReference type="PROSITE" id="PS00345">
    <property type="entry name" value="ETS_DOMAIN_1"/>
    <property type="match status" value="1"/>
</dbReference>
<dbReference type="PROSITE" id="PS00346">
    <property type="entry name" value="ETS_DOMAIN_2"/>
    <property type="match status" value="1"/>
</dbReference>
<dbReference type="PROSITE" id="PS50061">
    <property type="entry name" value="ETS_DOMAIN_3"/>
    <property type="match status" value="1"/>
</dbReference>
<protein>
    <recommendedName>
        <fullName>ETS domain-containing protein Elk-4</fullName>
    </recommendedName>
    <alternativeName>
        <fullName>Serum response factor accessory protein 1</fullName>
        <shortName>SAP-1</shortName>
        <shortName>SRF accessory protein 1</shortName>
    </alternativeName>
</protein>
<evidence type="ECO:0000255" key="1">
    <source>
        <dbReference type="PROSITE-ProRule" id="PRU00237"/>
    </source>
</evidence>
<evidence type="ECO:0000256" key="2">
    <source>
        <dbReference type="SAM" id="MobiDB-lite"/>
    </source>
</evidence>
<evidence type="ECO:0000269" key="3">
    <source>
    </source>
</evidence>
<evidence type="ECO:0000303" key="4">
    <source>
    </source>
</evidence>
<evidence type="ECO:0000305" key="5"/>
<evidence type="ECO:0007744" key="6">
    <source>
    </source>
</evidence>
<evidence type="ECO:0007744" key="7">
    <source>
    </source>
</evidence>
<evidence type="ECO:0007829" key="8">
    <source>
        <dbReference type="PDB" id="1BC8"/>
    </source>
</evidence>
<evidence type="ECO:0007829" key="9">
    <source>
        <dbReference type="PDB" id="1HBX"/>
    </source>
</evidence>
<evidence type="ECO:0007829" key="10">
    <source>
        <dbReference type="PDB" id="1K6O"/>
    </source>
</evidence>
<comment type="function">
    <text evidence="3">Involved in both transcriptional activation and repression. Interaction with SIRT7 leads to recruitment and stabilization of SIRT7 at promoters, followed by deacetylation of histone H3 at 'Lys-18' (H3K18Ac) and subsequent transcription repression. Forms a ternary complex with the serum response factor (SRF). Requires DNA-bound SRF for ternary complex formation and makes extensive DNA contacts to the 5'side of SRF, but does not bind DNA autonomously.</text>
</comment>
<comment type="subunit">
    <text evidence="3">Interacts with SIRT7.</text>
</comment>
<comment type="interaction">
    <interactant intactId="EBI-11277718">
        <id>P28324</id>
    </interactant>
    <interactant intactId="EBI-716046">
        <id>Q9NRC8</id>
        <label>SIRT7</label>
    </interactant>
    <organismsDiffer>false</organismsDiffer>
    <experiments>3</experiments>
</comment>
<comment type="subcellular location">
    <subcellularLocation>
        <location>Nucleus</location>
    </subcellularLocation>
</comment>
<comment type="alternative products">
    <event type="alternative splicing"/>
    <isoform>
        <id>P28324-1</id>
        <name>1</name>
        <name>SAP-1A</name>
        <sequence type="displayed"/>
    </isoform>
    <isoform>
        <id>P28324-2</id>
        <name>2</name>
        <name>SAP-1B</name>
        <sequence type="described" ref="VSP_001468"/>
    </isoform>
</comment>
<comment type="similarity">
    <text evidence="5">Belongs to the ETS family.</text>
</comment>
<proteinExistence type="evidence at protein level"/>